<organism>
    <name type="scientific">Haemophilus influenzae (strain ATCC 51907 / DSM 11121 / KW20 / Rd)</name>
    <dbReference type="NCBI Taxonomy" id="71421"/>
    <lineage>
        <taxon>Bacteria</taxon>
        <taxon>Pseudomonadati</taxon>
        <taxon>Pseudomonadota</taxon>
        <taxon>Gammaproteobacteria</taxon>
        <taxon>Pasteurellales</taxon>
        <taxon>Pasteurellaceae</taxon>
        <taxon>Haemophilus</taxon>
    </lineage>
</organism>
<sequence length="366" mass="41053">MQYINIANRGVKSLSPYQAGKPIEELERELGISNIVKLASNENPFGFPESAKKAIFEQLDKLTRYPDANGFELKQTIAKKFGVQPNQITLGNGSNDLLELFAHTFATEGDEIMYSQYAFIVYPLVTKAINAIVKEIPAKNWGHDLQGFLTALSDKTKLIYIANPNNPTGNFLTSQEIEDFLAEVPENVIVVLDEAYTEFTRSEERVDSFSLLKKYSNLIISRSLSKAYGLAGLRIGYAVSNPEIADLLNRVRQPFNCNSLALTAAVAVMNDDKFVEKVAENNRIEMRRYEDFCQKNQLDYIPSKGNFITIDFKQPAAPIYDALLREGVIVRPIAGYGMPNHLRISIGLPEENDKFFTALSKVLKFA</sequence>
<evidence type="ECO:0000250" key="1"/>
<evidence type="ECO:0000305" key="2"/>
<name>HIS82_HAEIN</name>
<feature type="chain" id="PRO_0000153369" description="Histidinol-phosphate aminotransferase 2">
    <location>
        <begin position="1"/>
        <end position="366"/>
    </location>
</feature>
<feature type="modified residue" description="N6-(pyridoxal phosphate)lysine" evidence="1">
    <location>
        <position position="226"/>
    </location>
</feature>
<protein>
    <recommendedName>
        <fullName>Histidinol-phosphate aminotransferase 2</fullName>
        <ecNumber>2.6.1.9</ecNumber>
    </recommendedName>
    <alternativeName>
        <fullName>Imidazole acetol-phosphate transaminase 2</fullName>
    </alternativeName>
</protein>
<reference key="1">
    <citation type="journal article" date="1995" name="Science">
        <title>Whole-genome random sequencing and assembly of Haemophilus influenzae Rd.</title>
        <authorList>
            <person name="Fleischmann R.D."/>
            <person name="Adams M.D."/>
            <person name="White O."/>
            <person name="Clayton R.A."/>
            <person name="Kirkness E.F."/>
            <person name="Kerlavage A.R."/>
            <person name="Bult C.J."/>
            <person name="Tomb J.-F."/>
            <person name="Dougherty B.A."/>
            <person name="Merrick J.M."/>
            <person name="McKenney K."/>
            <person name="Sutton G.G."/>
            <person name="FitzHugh W."/>
            <person name="Fields C.A."/>
            <person name="Gocayne J.D."/>
            <person name="Scott J.D."/>
            <person name="Shirley R."/>
            <person name="Liu L.-I."/>
            <person name="Glodek A."/>
            <person name="Kelley J.M."/>
            <person name="Weidman J.F."/>
            <person name="Phillips C.A."/>
            <person name="Spriggs T."/>
            <person name="Hedblom E."/>
            <person name="Cotton M.D."/>
            <person name="Utterback T.R."/>
            <person name="Hanna M.C."/>
            <person name="Nguyen D.T."/>
            <person name="Saudek D.M."/>
            <person name="Brandon R.C."/>
            <person name="Fine L.D."/>
            <person name="Fritchman J.L."/>
            <person name="Fuhrmann J.L."/>
            <person name="Geoghagen N.S.M."/>
            <person name="Gnehm C.L."/>
            <person name="McDonald L.A."/>
            <person name="Small K.V."/>
            <person name="Fraser C.M."/>
            <person name="Smith H.O."/>
            <person name="Venter J.C."/>
        </authorList>
    </citation>
    <scope>NUCLEOTIDE SEQUENCE [LARGE SCALE GENOMIC DNA]</scope>
    <source>
        <strain>ATCC 51907 / DSM 11121 / KW20 / Rd</strain>
    </source>
</reference>
<dbReference type="EC" id="2.6.1.9"/>
<dbReference type="EMBL" id="L42023">
    <property type="protein sequence ID" value="AAC22821.1"/>
    <property type="molecule type" value="Genomic_DNA"/>
</dbReference>
<dbReference type="PIR" id="D64187">
    <property type="entry name" value="D64187"/>
</dbReference>
<dbReference type="RefSeq" id="NP_439324.1">
    <property type="nucleotide sequence ID" value="NC_000907.1"/>
</dbReference>
<dbReference type="SMR" id="Q57004"/>
<dbReference type="STRING" id="71421.HI_1166"/>
<dbReference type="EnsemblBacteria" id="AAC22821">
    <property type="protein sequence ID" value="AAC22821"/>
    <property type="gene ID" value="HI_1166"/>
</dbReference>
<dbReference type="KEGG" id="hin:HI_1166"/>
<dbReference type="PATRIC" id="fig|71421.8.peg.1218"/>
<dbReference type="eggNOG" id="COG0079">
    <property type="taxonomic scope" value="Bacteria"/>
</dbReference>
<dbReference type="HOGENOM" id="CLU_017584_3_3_6"/>
<dbReference type="OrthoDB" id="9813612at2"/>
<dbReference type="PhylomeDB" id="Q57004"/>
<dbReference type="BioCyc" id="HINF71421:G1GJ1-1200-MONOMER"/>
<dbReference type="UniPathway" id="UPA00031">
    <property type="reaction ID" value="UER00012"/>
</dbReference>
<dbReference type="Proteomes" id="UP000000579">
    <property type="component" value="Chromosome"/>
</dbReference>
<dbReference type="GO" id="GO:0004400">
    <property type="term" value="F:histidinol-phosphate transaminase activity"/>
    <property type="evidence" value="ECO:0007669"/>
    <property type="project" value="UniProtKB-UniRule"/>
</dbReference>
<dbReference type="GO" id="GO:0030170">
    <property type="term" value="F:pyridoxal phosphate binding"/>
    <property type="evidence" value="ECO:0007669"/>
    <property type="project" value="InterPro"/>
</dbReference>
<dbReference type="GO" id="GO:0000105">
    <property type="term" value="P:L-histidine biosynthetic process"/>
    <property type="evidence" value="ECO:0007669"/>
    <property type="project" value="UniProtKB-UniRule"/>
</dbReference>
<dbReference type="CDD" id="cd00609">
    <property type="entry name" value="AAT_like"/>
    <property type="match status" value="1"/>
</dbReference>
<dbReference type="Gene3D" id="3.90.1150.10">
    <property type="entry name" value="Aspartate Aminotransferase, domain 1"/>
    <property type="match status" value="1"/>
</dbReference>
<dbReference type="Gene3D" id="3.40.640.10">
    <property type="entry name" value="Type I PLP-dependent aspartate aminotransferase-like (Major domain)"/>
    <property type="match status" value="1"/>
</dbReference>
<dbReference type="HAMAP" id="MF_01023">
    <property type="entry name" value="HisC_aminotrans_2"/>
    <property type="match status" value="1"/>
</dbReference>
<dbReference type="InterPro" id="IPR004839">
    <property type="entry name" value="Aminotransferase_I/II_large"/>
</dbReference>
<dbReference type="InterPro" id="IPR005861">
    <property type="entry name" value="HisP_aminotrans"/>
</dbReference>
<dbReference type="InterPro" id="IPR050106">
    <property type="entry name" value="HistidinolP_aminotransfase"/>
</dbReference>
<dbReference type="InterPro" id="IPR004838">
    <property type="entry name" value="NHTrfase_class1_PyrdxlP-BS"/>
</dbReference>
<dbReference type="InterPro" id="IPR015424">
    <property type="entry name" value="PyrdxlP-dep_Trfase"/>
</dbReference>
<dbReference type="InterPro" id="IPR015421">
    <property type="entry name" value="PyrdxlP-dep_Trfase_major"/>
</dbReference>
<dbReference type="InterPro" id="IPR015422">
    <property type="entry name" value="PyrdxlP-dep_Trfase_small"/>
</dbReference>
<dbReference type="NCBIfam" id="TIGR01141">
    <property type="entry name" value="hisC"/>
    <property type="match status" value="1"/>
</dbReference>
<dbReference type="PANTHER" id="PTHR43643:SF3">
    <property type="entry name" value="HISTIDINOL-PHOSPHATE AMINOTRANSFERASE"/>
    <property type="match status" value="1"/>
</dbReference>
<dbReference type="PANTHER" id="PTHR43643">
    <property type="entry name" value="HISTIDINOL-PHOSPHATE AMINOTRANSFERASE 2"/>
    <property type="match status" value="1"/>
</dbReference>
<dbReference type="Pfam" id="PF00155">
    <property type="entry name" value="Aminotran_1_2"/>
    <property type="match status" value="1"/>
</dbReference>
<dbReference type="SUPFAM" id="SSF53383">
    <property type="entry name" value="PLP-dependent transferases"/>
    <property type="match status" value="1"/>
</dbReference>
<dbReference type="PROSITE" id="PS00105">
    <property type="entry name" value="AA_TRANSFER_CLASS_1"/>
    <property type="match status" value="1"/>
</dbReference>
<proteinExistence type="inferred from homology"/>
<comment type="catalytic activity">
    <reaction>
        <text>L-histidinol phosphate + 2-oxoglutarate = 3-(imidazol-4-yl)-2-oxopropyl phosphate + L-glutamate</text>
        <dbReference type="Rhea" id="RHEA:23744"/>
        <dbReference type="ChEBI" id="CHEBI:16810"/>
        <dbReference type="ChEBI" id="CHEBI:29985"/>
        <dbReference type="ChEBI" id="CHEBI:57766"/>
        <dbReference type="ChEBI" id="CHEBI:57980"/>
        <dbReference type="EC" id="2.6.1.9"/>
    </reaction>
</comment>
<comment type="cofactor">
    <cofactor evidence="1">
        <name>pyridoxal 5'-phosphate</name>
        <dbReference type="ChEBI" id="CHEBI:597326"/>
    </cofactor>
</comment>
<comment type="pathway">
    <text>Amino-acid biosynthesis; L-histidine biosynthesis; L-histidine from 5-phospho-alpha-D-ribose 1-diphosphate: step 7/9.</text>
</comment>
<comment type="subunit">
    <text evidence="1">Homodimer.</text>
</comment>
<comment type="similarity">
    <text evidence="2">Belongs to the class-II pyridoxal-phosphate-dependent aminotransferase family. Histidinol-phosphate aminotransferase subfamily.</text>
</comment>
<accession>Q57004</accession>
<accession>P96340</accession>
<keyword id="KW-0028">Amino-acid biosynthesis</keyword>
<keyword id="KW-0032">Aminotransferase</keyword>
<keyword id="KW-0368">Histidine biosynthesis</keyword>
<keyword id="KW-0663">Pyridoxal phosphate</keyword>
<keyword id="KW-1185">Reference proteome</keyword>
<keyword id="KW-0808">Transferase</keyword>
<gene>
    <name type="primary">hisC2</name>
    <name type="ordered locus">HI_1166</name>
</gene>